<protein>
    <recommendedName>
        <fullName>Mitochondrial GTPase 1</fullName>
    </recommendedName>
</protein>
<gene>
    <name type="primary">MTG1</name>
    <name type="ordered locus">YMR097C</name>
    <name type="ORF">YM6543.04C</name>
</gene>
<sequence>MHINVRGTRKIISNVSSFTPRYEFPKYSMPLTDFKGHQVKALKTFEKLLPQMNMIIELRDIRAPLSTRNVVFDRIARKEHDVMKLVVYTRKDLMPGNKPYIGKLKNWHEELGEKFILLDCRNKTDVRNLLKILEWQNYELETNGGYLPMGYRALITGMPNVGKSTLINSLRTIFHNQVNMGRKFKKVAKTGAEAGVTRATSEVIRVTSRNTESRNEIYLIDTPGIGVPGRVSDHNRMLGLALCGSVKNNLVDPIFQADYLLYLMNLQNLNDGRTELYPGSTNSPTNDIYDVLRRLQVNKSQNEKSTAIEWTNKWRLHGKGIIFDPEVLLNNDEFSYKNYVNDQLEKLGDLSYEGLSNKLKGNPNQVF</sequence>
<organism>
    <name type="scientific">Saccharomyces cerevisiae (strain ATCC 204508 / S288c)</name>
    <name type="common">Baker's yeast</name>
    <dbReference type="NCBI Taxonomy" id="559292"/>
    <lineage>
        <taxon>Eukaryota</taxon>
        <taxon>Fungi</taxon>
        <taxon>Dikarya</taxon>
        <taxon>Ascomycota</taxon>
        <taxon>Saccharomycotina</taxon>
        <taxon>Saccharomycetes</taxon>
        <taxon>Saccharomycetales</taxon>
        <taxon>Saccharomycetaceae</taxon>
        <taxon>Saccharomyces</taxon>
    </lineage>
</organism>
<reference key="1">
    <citation type="journal article" date="1997" name="Nature">
        <title>The nucleotide sequence of Saccharomyces cerevisiae chromosome XIII.</title>
        <authorList>
            <person name="Bowman S."/>
            <person name="Churcher C.M."/>
            <person name="Badcock K."/>
            <person name="Brown D."/>
            <person name="Chillingworth T."/>
            <person name="Connor R."/>
            <person name="Dedman K."/>
            <person name="Devlin K."/>
            <person name="Gentles S."/>
            <person name="Hamlin N."/>
            <person name="Hunt S."/>
            <person name="Jagels K."/>
            <person name="Lye G."/>
            <person name="Moule S."/>
            <person name="Odell C."/>
            <person name="Pearson D."/>
            <person name="Rajandream M.A."/>
            <person name="Rice P."/>
            <person name="Skelton J."/>
            <person name="Walsh S.V."/>
            <person name="Whitehead S."/>
            <person name="Barrell B.G."/>
        </authorList>
    </citation>
    <scope>NUCLEOTIDE SEQUENCE [LARGE SCALE GENOMIC DNA]</scope>
    <source>
        <strain>ATCC 204508 / S288c</strain>
    </source>
</reference>
<reference key="2">
    <citation type="journal article" date="2014" name="G3 (Bethesda)">
        <title>The reference genome sequence of Saccharomyces cerevisiae: Then and now.</title>
        <authorList>
            <person name="Engel S.R."/>
            <person name="Dietrich F.S."/>
            <person name="Fisk D.G."/>
            <person name="Binkley G."/>
            <person name="Balakrishnan R."/>
            <person name="Costanzo M.C."/>
            <person name="Dwight S.S."/>
            <person name="Hitz B.C."/>
            <person name="Karra K."/>
            <person name="Nash R.S."/>
            <person name="Weng S."/>
            <person name="Wong E.D."/>
            <person name="Lloyd P."/>
            <person name="Skrzypek M.S."/>
            <person name="Miyasato S.R."/>
            <person name="Simison M."/>
            <person name="Cherry J.M."/>
        </authorList>
    </citation>
    <scope>GENOME REANNOTATION</scope>
    <source>
        <strain>ATCC 204508 / S288c</strain>
    </source>
</reference>
<reference key="3">
    <citation type="journal article" date="2003" name="Mol. Biol. Cell">
        <title>MTG1 codes for a conserved protein required for mitochondrial translation.</title>
        <authorList>
            <person name="Barrientos A."/>
            <person name="Korr D."/>
            <person name="Barwell K.J."/>
            <person name="Sjulsen C."/>
            <person name="Gajewski C.D."/>
            <person name="Manfredi G."/>
            <person name="Ackerman S."/>
            <person name="Tzagoloff A."/>
        </authorList>
    </citation>
    <scope>FUNCTION</scope>
    <scope>SUBCELLULAR LOCATION</scope>
</reference>
<reference key="4">
    <citation type="journal article" date="2003" name="Nature">
        <title>Global analysis of protein localization in budding yeast.</title>
        <authorList>
            <person name="Huh W.-K."/>
            <person name="Falvo J.V."/>
            <person name="Gerke L.C."/>
            <person name="Carroll A.S."/>
            <person name="Howson R.W."/>
            <person name="Weissman J.S."/>
            <person name="O'Shea E.K."/>
        </authorList>
    </citation>
    <scope>SUBCELLULAR LOCATION [LARGE SCALE ANALYSIS]</scope>
</reference>
<reference key="5">
    <citation type="journal article" date="2003" name="Nature">
        <title>Global analysis of protein expression in yeast.</title>
        <authorList>
            <person name="Ghaemmaghami S."/>
            <person name="Huh W.-K."/>
            <person name="Bower K."/>
            <person name="Howson R.W."/>
            <person name="Belle A."/>
            <person name="Dephoure N."/>
            <person name="O'Shea E.K."/>
            <person name="Weissman J.S."/>
        </authorList>
    </citation>
    <scope>LEVEL OF PROTEIN EXPRESSION [LARGE SCALE ANALYSIS]</scope>
</reference>
<reference key="6">
    <citation type="journal article" date="2006" name="J. Proteome Res.">
        <title>Toward the complete yeast mitochondrial proteome: multidimensional separation techniques for mitochondrial proteomics.</title>
        <authorList>
            <person name="Reinders J."/>
            <person name="Zahedi R.P."/>
            <person name="Pfanner N."/>
            <person name="Meisinger C."/>
            <person name="Sickmann A."/>
        </authorList>
    </citation>
    <scope>SUBCELLULAR LOCATION [LARGE SCALE ANALYSIS]</scope>
    <scope>IDENTIFICATION BY MASS SPECTROMETRY</scope>
</reference>
<keyword id="KW-0342">GTP-binding</keyword>
<keyword id="KW-0472">Membrane</keyword>
<keyword id="KW-0496">Mitochondrion</keyword>
<keyword id="KW-0999">Mitochondrion inner membrane</keyword>
<keyword id="KW-0547">Nucleotide-binding</keyword>
<keyword id="KW-1185">Reference proteome</keyword>
<keyword id="KW-0809">Transit peptide</keyword>
<accession>Q03151</accession>
<accession>D6VZS0</accession>
<dbReference type="EMBL" id="Z49807">
    <property type="protein sequence ID" value="CAA89898.1"/>
    <property type="molecule type" value="Genomic_DNA"/>
</dbReference>
<dbReference type="EMBL" id="BK006946">
    <property type="protein sequence ID" value="DAA09994.1"/>
    <property type="molecule type" value="Genomic_DNA"/>
</dbReference>
<dbReference type="PIR" id="S55083">
    <property type="entry name" value="S55083"/>
</dbReference>
<dbReference type="RefSeq" id="NP_013815.1">
    <property type="nucleotide sequence ID" value="NM_001182597.1"/>
</dbReference>
<dbReference type="SMR" id="Q03151"/>
<dbReference type="BioGRID" id="35272">
    <property type="interactions" value="208"/>
</dbReference>
<dbReference type="DIP" id="DIP-4441N"/>
<dbReference type="FunCoup" id="Q03151">
    <property type="interactions" value="862"/>
</dbReference>
<dbReference type="IntAct" id="Q03151">
    <property type="interactions" value="4"/>
</dbReference>
<dbReference type="MINT" id="Q03151"/>
<dbReference type="STRING" id="4932.YMR097C"/>
<dbReference type="PaxDb" id="4932-YMR097C"/>
<dbReference type="PeptideAtlas" id="Q03151"/>
<dbReference type="EnsemblFungi" id="YMR097C_mRNA">
    <property type="protein sequence ID" value="YMR097C"/>
    <property type="gene ID" value="YMR097C"/>
</dbReference>
<dbReference type="GeneID" id="855122"/>
<dbReference type="KEGG" id="sce:YMR097C"/>
<dbReference type="AGR" id="SGD:S000004703"/>
<dbReference type="SGD" id="S000004703">
    <property type="gene designation" value="MTG1"/>
</dbReference>
<dbReference type="VEuPathDB" id="FungiDB:YMR097C"/>
<dbReference type="eggNOG" id="KOG2485">
    <property type="taxonomic scope" value="Eukaryota"/>
</dbReference>
<dbReference type="GeneTree" id="ENSGT00500000044923"/>
<dbReference type="HOGENOM" id="CLU_011106_0_1_1"/>
<dbReference type="InParanoid" id="Q03151"/>
<dbReference type="OMA" id="GVLWPKF"/>
<dbReference type="OrthoDB" id="269151at2759"/>
<dbReference type="BioCyc" id="YEAST:G3O-32797-MONOMER"/>
<dbReference type="BioGRID-ORCS" id="855122">
    <property type="hits" value="0 hits in 10 CRISPR screens"/>
</dbReference>
<dbReference type="PRO" id="PR:Q03151"/>
<dbReference type="Proteomes" id="UP000002311">
    <property type="component" value="Chromosome XIII"/>
</dbReference>
<dbReference type="RNAct" id="Q03151">
    <property type="molecule type" value="protein"/>
</dbReference>
<dbReference type="GO" id="GO:0005743">
    <property type="term" value="C:mitochondrial inner membrane"/>
    <property type="evidence" value="ECO:0000314"/>
    <property type="project" value="SGD"/>
</dbReference>
<dbReference type="GO" id="GO:0005739">
    <property type="term" value="C:mitochondrion"/>
    <property type="evidence" value="ECO:0007005"/>
    <property type="project" value="SGD"/>
</dbReference>
<dbReference type="GO" id="GO:0005634">
    <property type="term" value="C:nucleus"/>
    <property type="evidence" value="ECO:0007005"/>
    <property type="project" value="SGD"/>
</dbReference>
<dbReference type="GO" id="GO:0005525">
    <property type="term" value="F:GTP binding"/>
    <property type="evidence" value="ECO:0007669"/>
    <property type="project" value="UniProtKB-KW"/>
</dbReference>
<dbReference type="GO" id="GO:0003924">
    <property type="term" value="F:GTPase activity"/>
    <property type="evidence" value="ECO:0000247"/>
    <property type="project" value="SGD"/>
</dbReference>
<dbReference type="GO" id="GO:1902775">
    <property type="term" value="P:mitochondrial large ribosomal subunit assembly"/>
    <property type="evidence" value="ECO:0000315"/>
    <property type="project" value="SGD"/>
</dbReference>
<dbReference type="GO" id="GO:0032543">
    <property type="term" value="P:mitochondrial translation"/>
    <property type="evidence" value="ECO:0000318"/>
    <property type="project" value="GO_Central"/>
</dbReference>
<dbReference type="CDD" id="cd01856">
    <property type="entry name" value="YlqF"/>
    <property type="match status" value="1"/>
</dbReference>
<dbReference type="Gene3D" id="3.40.50.300">
    <property type="entry name" value="P-loop containing nucleotide triphosphate hydrolases"/>
    <property type="match status" value="1"/>
</dbReference>
<dbReference type="InterPro" id="IPR030378">
    <property type="entry name" value="G_CP_dom"/>
</dbReference>
<dbReference type="InterPro" id="IPR006073">
    <property type="entry name" value="GTP-bd"/>
</dbReference>
<dbReference type="InterPro" id="IPR027417">
    <property type="entry name" value="P-loop_NTPase"/>
</dbReference>
<dbReference type="PANTHER" id="PTHR45782">
    <property type="entry name" value="MITOCHONDRIAL RIBOSOME-ASSOCIATED GTPASE 1"/>
    <property type="match status" value="1"/>
</dbReference>
<dbReference type="PANTHER" id="PTHR45782:SF4">
    <property type="entry name" value="MITOCHONDRIAL RIBOSOME-ASSOCIATED GTPASE 1"/>
    <property type="match status" value="1"/>
</dbReference>
<dbReference type="Pfam" id="PF01926">
    <property type="entry name" value="MMR_HSR1"/>
    <property type="match status" value="1"/>
</dbReference>
<dbReference type="SUPFAM" id="SSF52540">
    <property type="entry name" value="P-loop containing nucleoside triphosphate hydrolases"/>
    <property type="match status" value="1"/>
</dbReference>
<dbReference type="PROSITE" id="PS51721">
    <property type="entry name" value="G_CP"/>
    <property type="match status" value="1"/>
</dbReference>
<proteinExistence type="evidence at protein level"/>
<comment type="function">
    <text evidence="4">Mitochondrial GTPase involved in assembly of the large ribosomal subunit (PubMed:12808030). Plays a role in expression of the mitochondrial translational machinery (PubMed:12808030).</text>
</comment>
<comment type="subcellular location">
    <subcellularLocation>
        <location evidence="4 5 7">Mitochondrion inner membrane</location>
        <topology evidence="4 5 7">Peripheral membrane protein</topology>
    </subcellularLocation>
</comment>
<comment type="miscellaneous">
    <text evidence="6">Present with 1630 molecules/cell in log phase SD medium.</text>
</comment>
<comment type="similarity">
    <text evidence="3">Belongs to the TRAFAC class YlqF/YawG GTPase family. MTG1 subfamily.</text>
</comment>
<name>MTG1_YEAST</name>
<evidence type="ECO:0000250" key="1"/>
<evidence type="ECO:0000255" key="2"/>
<evidence type="ECO:0000255" key="3">
    <source>
        <dbReference type="PROSITE-ProRule" id="PRU01058"/>
    </source>
</evidence>
<evidence type="ECO:0000269" key="4">
    <source>
    </source>
</evidence>
<evidence type="ECO:0000269" key="5">
    <source>
    </source>
</evidence>
<evidence type="ECO:0000269" key="6">
    <source>
    </source>
</evidence>
<evidence type="ECO:0000269" key="7">
    <source>
    </source>
</evidence>
<feature type="transit peptide" description="Mitochondrion" evidence="2">
    <location>
        <begin position="1"/>
        <end status="unknown"/>
    </location>
</feature>
<feature type="chain" id="PRO_0000203287" description="Mitochondrial GTPase 1">
    <location>
        <begin status="unknown"/>
        <end position="367"/>
    </location>
</feature>
<feature type="domain" description="CP-type G" evidence="3">
    <location>
        <begin position="42"/>
        <end position="228"/>
    </location>
</feature>
<feature type="binding site" evidence="2">
    <location>
        <begin position="89"/>
        <end position="92"/>
    </location>
    <ligand>
        <name>GTP</name>
        <dbReference type="ChEBI" id="CHEBI:37565"/>
    </ligand>
</feature>
<feature type="binding site" evidence="1">
    <location>
        <begin position="160"/>
        <end position="165"/>
    </location>
    <ligand>
        <name>GTP</name>
        <dbReference type="ChEBI" id="CHEBI:37565"/>
    </ligand>
</feature>
<feature type="binding site" evidence="1">
    <location>
        <position position="224"/>
    </location>
    <ligand>
        <name>GTP</name>
        <dbReference type="ChEBI" id="CHEBI:37565"/>
    </ligand>
</feature>